<gene>
    <name evidence="1" type="primary">glsA</name>
    <name type="ordered locus">VP2623</name>
</gene>
<reference key="1">
    <citation type="journal article" date="2003" name="Lancet">
        <title>Genome sequence of Vibrio parahaemolyticus: a pathogenic mechanism distinct from that of V. cholerae.</title>
        <authorList>
            <person name="Makino K."/>
            <person name="Oshima K."/>
            <person name="Kurokawa K."/>
            <person name="Yokoyama K."/>
            <person name="Uda T."/>
            <person name="Tagomori K."/>
            <person name="Iijima Y."/>
            <person name="Najima M."/>
            <person name="Nakano M."/>
            <person name="Yamashita A."/>
            <person name="Kubota Y."/>
            <person name="Kimura S."/>
            <person name="Yasunaga T."/>
            <person name="Honda T."/>
            <person name="Shinagawa H."/>
            <person name="Hattori M."/>
            <person name="Iida T."/>
        </authorList>
    </citation>
    <scope>NUCLEOTIDE SEQUENCE [LARGE SCALE GENOMIC DNA]</scope>
    <source>
        <strain>RIMD 2210633</strain>
    </source>
</reference>
<name>GLSA_VIBPA</name>
<keyword id="KW-0378">Hydrolase</keyword>
<comment type="catalytic activity">
    <reaction evidence="1">
        <text>L-glutamine + H2O = L-glutamate + NH4(+)</text>
        <dbReference type="Rhea" id="RHEA:15889"/>
        <dbReference type="ChEBI" id="CHEBI:15377"/>
        <dbReference type="ChEBI" id="CHEBI:28938"/>
        <dbReference type="ChEBI" id="CHEBI:29985"/>
        <dbReference type="ChEBI" id="CHEBI:58359"/>
        <dbReference type="EC" id="3.5.1.2"/>
    </reaction>
</comment>
<comment type="subunit">
    <text evidence="1">Homotetramer.</text>
</comment>
<comment type="similarity">
    <text evidence="1">Belongs to the glutaminase family.</text>
</comment>
<protein>
    <recommendedName>
        <fullName evidence="1">Glutaminase</fullName>
        <ecNumber evidence="1">3.5.1.2</ecNumber>
    </recommendedName>
</protein>
<accession>Q87LI9</accession>
<organism>
    <name type="scientific">Vibrio parahaemolyticus serotype O3:K6 (strain RIMD 2210633)</name>
    <dbReference type="NCBI Taxonomy" id="223926"/>
    <lineage>
        <taxon>Bacteria</taxon>
        <taxon>Pseudomonadati</taxon>
        <taxon>Pseudomonadota</taxon>
        <taxon>Gammaproteobacteria</taxon>
        <taxon>Vibrionales</taxon>
        <taxon>Vibrionaceae</taxon>
        <taxon>Vibrio</taxon>
    </lineage>
</organism>
<feature type="chain" id="PRO_0000110630" description="Glutaminase">
    <location>
        <begin position="1"/>
        <end position="306"/>
    </location>
</feature>
<feature type="binding site" evidence="1">
    <location>
        <position position="64"/>
    </location>
    <ligand>
        <name>substrate</name>
    </ligand>
</feature>
<feature type="binding site" evidence="1">
    <location>
        <position position="115"/>
    </location>
    <ligand>
        <name>substrate</name>
    </ligand>
</feature>
<feature type="binding site" evidence="1">
    <location>
        <position position="159"/>
    </location>
    <ligand>
        <name>substrate</name>
    </ligand>
</feature>
<feature type="binding site" evidence="1">
    <location>
        <position position="166"/>
    </location>
    <ligand>
        <name>substrate</name>
    </ligand>
</feature>
<feature type="binding site" evidence="1">
    <location>
        <position position="190"/>
    </location>
    <ligand>
        <name>substrate</name>
    </ligand>
</feature>
<feature type="binding site" evidence="1">
    <location>
        <position position="242"/>
    </location>
    <ligand>
        <name>substrate</name>
    </ligand>
</feature>
<feature type="binding site" evidence="1">
    <location>
        <position position="260"/>
    </location>
    <ligand>
        <name>substrate</name>
    </ligand>
</feature>
<dbReference type="EC" id="3.5.1.2" evidence="1"/>
<dbReference type="EMBL" id="BA000031">
    <property type="protein sequence ID" value="BAC60886.1"/>
    <property type="molecule type" value="Genomic_DNA"/>
</dbReference>
<dbReference type="RefSeq" id="NP_799002.1">
    <property type="nucleotide sequence ID" value="NC_004603.1"/>
</dbReference>
<dbReference type="SMR" id="Q87LI9"/>
<dbReference type="GeneID" id="1190147"/>
<dbReference type="KEGG" id="vpa:VP2623"/>
<dbReference type="PATRIC" id="fig|223926.6.peg.2519"/>
<dbReference type="eggNOG" id="COG2066">
    <property type="taxonomic scope" value="Bacteria"/>
</dbReference>
<dbReference type="HOGENOM" id="CLU_027932_1_1_6"/>
<dbReference type="Proteomes" id="UP000002493">
    <property type="component" value="Chromosome 1"/>
</dbReference>
<dbReference type="GO" id="GO:0004359">
    <property type="term" value="F:glutaminase activity"/>
    <property type="evidence" value="ECO:0007669"/>
    <property type="project" value="UniProtKB-UniRule"/>
</dbReference>
<dbReference type="GO" id="GO:0006537">
    <property type="term" value="P:glutamate biosynthetic process"/>
    <property type="evidence" value="ECO:0007669"/>
    <property type="project" value="TreeGrafter"/>
</dbReference>
<dbReference type="GO" id="GO:0006543">
    <property type="term" value="P:glutamine catabolic process"/>
    <property type="evidence" value="ECO:0007669"/>
    <property type="project" value="TreeGrafter"/>
</dbReference>
<dbReference type="FunFam" id="3.40.710.10:FF:000005">
    <property type="entry name" value="Glutaminase"/>
    <property type="match status" value="1"/>
</dbReference>
<dbReference type="Gene3D" id="3.40.710.10">
    <property type="entry name" value="DD-peptidase/beta-lactamase superfamily"/>
    <property type="match status" value="1"/>
</dbReference>
<dbReference type="HAMAP" id="MF_00313">
    <property type="entry name" value="Glutaminase"/>
    <property type="match status" value="1"/>
</dbReference>
<dbReference type="InterPro" id="IPR012338">
    <property type="entry name" value="Beta-lactam/transpept-like"/>
</dbReference>
<dbReference type="InterPro" id="IPR015868">
    <property type="entry name" value="Glutaminase"/>
</dbReference>
<dbReference type="NCBIfam" id="TIGR03814">
    <property type="entry name" value="Gln_ase"/>
    <property type="match status" value="1"/>
</dbReference>
<dbReference type="NCBIfam" id="NF002132">
    <property type="entry name" value="PRK00971.1-1"/>
    <property type="match status" value="1"/>
</dbReference>
<dbReference type="NCBIfam" id="NF002133">
    <property type="entry name" value="PRK00971.1-2"/>
    <property type="match status" value="1"/>
</dbReference>
<dbReference type="PANTHER" id="PTHR12544">
    <property type="entry name" value="GLUTAMINASE"/>
    <property type="match status" value="1"/>
</dbReference>
<dbReference type="PANTHER" id="PTHR12544:SF29">
    <property type="entry name" value="GLUTAMINASE"/>
    <property type="match status" value="1"/>
</dbReference>
<dbReference type="Pfam" id="PF04960">
    <property type="entry name" value="Glutaminase"/>
    <property type="match status" value="1"/>
</dbReference>
<dbReference type="SUPFAM" id="SSF56601">
    <property type="entry name" value="beta-lactamase/transpeptidase-like"/>
    <property type="match status" value="1"/>
</dbReference>
<evidence type="ECO:0000255" key="1">
    <source>
        <dbReference type="HAMAP-Rule" id="MF_00313"/>
    </source>
</evidence>
<sequence length="306" mass="32854">MKPTAEILTDILAEVRPLIGQGKVADYIPALAKVPNNKLAIAVYTNEGEVIKAGDADESFSIQSISKALSLTLAMCLYKQEEIWARVGKEPSGQAFNSLIQLEMEQGIPRNPFINAGAIVVADLLQSRLSAPRQRLLEFVRQLSGDTHIVYDKVVAASEMMHGDRNAAIAYLMRSFGNFENEVIPVLQNYFHACALKMSCVDLAKTFSYLANKGTSVQTGKPVVSPTQTKQLNALLATCGLYDGAGEFAYRVGMPGKSGVGGGIIAVVPGEMTIAVWSPELDASGNSLAGTKALELLSERIGRSIF</sequence>
<proteinExistence type="inferred from homology"/>